<organism>
    <name type="scientific">Anilius scytale</name>
    <name type="common">Coral cylinder snake</name>
    <name type="synonym">Anguis scytale</name>
    <dbReference type="NCBI Taxonomy" id="51844"/>
    <lineage>
        <taxon>Eukaryota</taxon>
        <taxon>Metazoa</taxon>
        <taxon>Chordata</taxon>
        <taxon>Craniata</taxon>
        <taxon>Vertebrata</taxon>
        <taxon>Euteleostomi</taxon>
        <taxon>Lepidosauria</taxon>
        <taxon>Squamata</taxon>
        <taxon>Bifurcata</taxon>
        <taxon>Unidentata</taxon>
        <taxon>Episquamata</taxon>
        <taxon>Toxicofera</taxon>
        <taxon>Serpentes</taxon>
        <taxon>Henophidia</taxon>
        <taxon>Aniliidae</taxon>
        <taxon>Anilius</taxon>
    </lineage>
</organism>
<reference key="1">
    <citation type="journal article" date="2006" name="Mol. Phylogenet. Evol.">
        <title>Dispersal and vicariance: the complex evolutionary history of boid snakes.</title>
        <authorList>
            <person name="Noonan B.P."/>
            <person name="Chippindale P.T."/>
        </authorList>
    </citation>
    <scope>NUCLEOTIDE SEQUENCE [GENOMIC DNA]</scope>
</reference>
<sequence length="165" mass="18653">IQSTSMDQGSLSEDSMNSFIRTLIQAGIWKNKVPRQMTRTQDGIQTIVKKTEDEPDATASKDISLGFQPIVSMDAELLRQQRRFSSPRVLLSENTPLEPPPLYLMEEPMVLNRTSRRKRFAEGKSHRGEYSVCDSESRWVTDKSSAVDIRGHQVTVLGEIRMGPS</sequence>
<evidence type="ECO:0000250" key="1"/>
<evidence type="ECO:0000255" key="2"/>
<evidence type="ECO:0000305" key="3"/>
<feature type="signal peptide" evidence="2">
    <location>
        <begin position="1" status="less than"/>
        <end position="3"/>
    </location>
</feature>
<feature type="propeptide" id="PRO_0000346707" evidence="1">
    <location>
        <begin position="4"/>
        <end position="119"/>
    </location>
</feature>
<feature type="chain" id="PRO_0000346708" description="Neurotrophin-3">
    <location>
        <begin position="120"/>
        <end position="165" status="greater than"/>
    </location>
</feature>
<feature type="glycosylation site" description="N-linked (GlcNAc...) asparagine" evidence="2">
    <location>
        <position position="112"/>
    </location>
</feature>
<feature type="non-terminal residue">
    <location>
        <position position="1"/>
    </location>
</feature>
<feature type="non-terminal residue">
    <location>
        <position position="165"/>
    </location>
</feature>
<comment type="function">
    <text evidence="1">Seems to promote the survival of visceral and proprioceptive sensory neurons.</text>
</comment>
<comment type="subcellular location">
    <subcellularLocation>
        <location evidence="1">Secreted</location>
    </subcellularLocation>
</comment>
<comment type="similarity">
    <text evidence="3">Belongs to the NGF-beta family.</text>
</comment>
<name>NTF3_ANISC</name>
<gene>
    <name type="primary">NTF3</name>
</gene>
<proteinExistence type="inferred from homology"/>
<protein>
    <recommendedName>
        <fullName>Neurotrophin-3</fullName>
        <shortName>NT-3</shortName>
    </recommendedName>
</protein>
<keyword id="KW-0165">Cleavage on pair of basic residues</keyword>
<keyword id="KW-0325">Glycoprotein</keyword>
<keyword id="KW-0339">Growth factor</keyword>
<keyword id="KW-0964">Secreted</keyword>
<keyword id="KW-0732">Signal</keyword>
<dbReference type="EMBL" id="AY988055">
    <property type="protein sequence ID" value="AAY44262.1"/>
    <property type="molecule type" value="Genomic_DNA"/>
</dbReference>
<dbReference type="SMR" id="Q1X6Y3"/>
<dbReference type="GlyCosmos" id="Q1X6Y3">
    <property type="glycosylation" value="1 site, No reported glycans"/>
</dbReference>
<dbReference type="GO" id="GO:0030424">
    <property type="term" value="C:axon"/>
    <property type="evidence" value="ECO:0007669"/>
    <property type="project" value="TreeGrafter"/>
</dbReference>
<dbReference type="GO" id="GO:0030425">
    <property type="term" value="C:dendrite"/>
    <property type="evidence" value="ECO:0007669"/>
    <property type="project" value="TreeGrafter"/>
</dbReference>
<dbReference type="GO" id="GO:0005615">
    <property type="term" value="C:extracellular space"/>
    <property type="evidence" value="ECO:0007669"/>
    <property type="project" value="TreeGrafter"/>
</dbReference>
<dbReference type="GO" id="GO:0008021">
    <property type="term" value="C:synaptic vesicle"/>
    <property type="evidence" value="ECO:0007669"/>
    <property type="project" value="TreeGrafter"/>
</dbReference>
<dbReference type="GO" id="GO:0008083">
    <property type="term" value="F:growth factor activity"/>
    <property type="evidence" value="ECO:0007669"/>
    <property type="project" value="UniProtKB-KW"/>
</dbReference>
<dbReference type="GO" id="GO:0005163">
    <property type="term" value="F:nerve growth factor receptor binding"/>
    <property type="evidence" value="ECO:0007669"/>
    <property type="project" value="TreeGrafter"/>
</dbReference>
<dbReference type="GO" id="GO:0007169">
    <property type="term" value="P:cell surface receptor protein tyrosine kinase signaling pathway"/>
    <property type="evidence" value="ECO:0007669"/>
    <property type="project" value="TreeGrafter"/>
</dbReference>
<dbReference type="GO" id="GO:0050804">
    <property type="term" value="P:modulation of chemical synaptic transmission"/>
    <property type="evidence" value="ECO:0007669"/>
    <property type="project" value="TreeGrafter"/>
</dbReference>
<dbReference type="GO" id="GO:0043524">
    <property type="term" value="P:negative regulation of neuron apoptotic process"/>
    <property type="evidence" value="ECO:0007669"/>
    <property type="project" value="TreeGrafter"/>
</dbReference>
<dbReference type="GO" id="GO:0021675">
    <property type="term" value="P:nerve development"/>
    <property type="evidence" value="ECO:0007669"/>
    <property type="project" value="TreeGrafter"/>
</dbReference>
<dbReference type="GO" id="GO:0038180">
    <property type="term" value="P:nerve growth factor signaling pathway"/>
    <property type="evidence" value="ECO:0007669"/>
    <property type="project" value="TreeGrafter"/>
</dbReference>
<dbReference type="GO" id="GO:0048812">
    <property type="term" value="P:neuron projection morphogenesis"/>
    <property type="evidence" value="ECO:0007669"/>
    <property type="project" value="TreeGrafter"/>
</dbReference>
<dbReference type="Gene3D" id="2.10.90.10">
    <property type="entry name" value="Cystine-knot cytokines"/>
    <property type="match status" value="1"/>
</dbReference>
<dbReference type="InterPro" id="IPR029034">
    <property type="entry name" value="Cystine-knot_cytokine"/>
</dbReference>
<dbReference type="InterPro" id="IPR020408">
    <property type="entry name" value="Nerve_growth_factor-like"/>
</dbReference>
<dbReference type="InterPro" id="IPR002072">
    <property type="entry name" value="Nerve_growth_factor-rel"/>
</dbReference>
<dbReference type="InterPro" id="IPR015578">
    <property type="entry name" value="Neurotrophin-3"/>
</dbReference>
<dbReference type="InterPro" id="IPR045815">
    <property type="entry name" value="NTF3_N"/>
</dbReference>
<dbReference type="PANTHER" id="PTHR11589">
    <property type="entry name" value="NERVE GROWTH FACTOR NGF -RELATED"/>
    <property type="match status" value="1"/>
</dbReference>
<dbReference type="PANTHER" id="PTHR11589:SF4">
    <property type="entry name" value="NEUROTROPHIN-3"/>
    <property type="match status" value="1"/>
</dbReference>
<dbReference type="Pfam" id="PF00243">
    <property type="entry name" value="NGF"/>
    <property type="match status" value="1"/>
</dbReference>
<dbReference type="Pfam" id="PF19338">
    <property type="entry name" value="NTF3_N"/>
    <property type="match status" value="1"/>
</dbReference>
<dbReference type="PIRSF" id="PIRSF001789">
    <property type="entry name" value="NGF"/>
    <property type="match status" value="1"/>
</dbReference>
<dbReference type="PRINTS" id="PR01914">
    <property type="entry name" value="NEUROTROPHN3"/>
</dbReference>
<dbReference type="SMART" id="SM00140">
    <property type="entry name" value="NGF"/>
    <property type="match status" value="1"/>
</dbReference>
<dbReference type="SUPFAM" id="SSF57501">
    <property type="entry name" value="Cystine-knot cytokines"/>
    <property type="match status" value="1"/>
</dbReference>
<dbReference type="PROSITE" id="PS50270">
    <property type="entry name" value="NGF_2"/>
    <property type="match status" value="1"/>
</dbReference>
<accession>Q1X6Y3</accession>